<keyword id="KW-0963">Cytoplasm</keyword>
<keyword id="KW-0413">Isomerase</keyword>
<keyword id="KW-0627">Porphyrin biosynthesis</keyword>
<keyword id="KW-0663">Pyridoxal phosphate</keyword>
<keyword id="KW-1185">Reference proteome</keyword>
<name>GSA_ECOK1</name>
<accession>A1A7K0</accession>
<evidence type="ECO:0000255" key="1">
    <source>
        <dbReference type="HAMAP-Rule" id="MF_00375"/>
    </source>
</evidence>
<proteinExistence type="inferred from homology"/>
<gene>
    <name evidence="1" type="primary">hemL</name>
    <name type="ordered locus">Ecok1_01460</name>
    <name type="ORF">APECO1_1831</name>
</gene>
<organism>
    <name type="scientific">Escherichia coli O1:K1 / APEC</name>
    <dbReference type="NCBI Taxonomy" id="405955"/>
    <lineage>
        <taxon>Bacteria</taxon>
        <taxon>Pseudomonadati</taxon>
        <taxon>Pseudomonadota</taxon>
        <taxon>Gammaproteobacteria</taxon>
        <taxon>Enterobacterales</taxon>
        <taxon>Enterobacteriaceae</taxon>
        <taxon>Escherichia</taxon>
    </lineage>
</organism>
<comment type="catalytic activity">
    <reaction evidence="1">
        <text>(S)-4-amino-5-oxopentanoate = 5-aminolevulinate</text>
        <dbReference type="Rhea" id="RHEA:14265"/>
        <dbReference type="ChEBI" id="CHEBI:57501"/>
        <dbReference type="ChEBI" id="CHEBI:356416"/>
        <dbReference type="EC" id="5.4.3.8"/>
    </reaction>
</comment>
<comment type="cofactor">
    <cofactor evidence="1">
        <name>pyridoxal 5'-phosphate</name>
        <dbReference type="ChEBI" id="CHEBI:597326"/>
    </cofactor>
</comment>
<comment type="pathway">
    <text evidence="1">Porphyrin-containing compound metabolism; protoporphyrin-IX biosynthesis; 5-aminolevulinate from L-glutamyl-tRNA(Glu): step 2/2.</text>
</comment>
<comment type="subunit">
    <text evidence="1">Homodimer.</text>
</comment>
<comment type="subcellular location">
    <subcellularLocation>
        <location evidence="1">Cytoplasm</location>
    </subcellularLocation>
</comment>
<comment type="similarity">
    <text evidence="1">Belongs to the class-III pyridoxal-phosphate-dependent aminotransferase family. HemL subfamily.</text>
</comment>
<sequence>MSKSENLYSAARELIPGGVNSPVRAFTGVGGTPLFIEKADGAYLYDVDGKAYIDYVGSWGPMVLGHNHPAIRNAVIEAAERGLSFGAPTEMEVKMAQLVTELVPTMDMVRMVNSGTEATMSAIRLARGFTGRDKIIKFEGCYHGHADCLLVKAGSGALTLGQPNSPGVPADFAKHTLTCTYNDLASVRAAFEQYPQEIACIIVEPVAGNMNCVPPLPEFLPGLRALCDEFGALLIIDEVMTGFRVALAGAQDYYGVEPDLTCLGKIIGGGMPVGAFGGRRDVMDALAPTGPVYQAGTLSGNPIAMAAGFACLNEVAQPGVHETLDELTTRLAEGLREAAEEAGIPLVVNHVGGMFGIFFTDAESVTCYQDVMACDVERFKRFFHMMLDEGVYLAPSAFEAGFMSVAHSMEDINNTIDAARRVFAKL</sequence>
<dbReference type="EC" id="5.4.3.8" evidence="1"/>
<dbReference type="EMBL" id="CP000468">
    <property type="protein sequence ID" value="ABI99639.1"/>
    <property type="molecule type" value="Genomic_DNA"/>
</dbReference>
<dbReference type="RefSeq" id="WP_000045295.1">
    <property type="nucleotide sequence ID" value="NZ_CADILS010000027.1"/>
</dbReference>
<dbReference type="SMR" id="A1A7K0"/>
<dbReference type="KEGG" id="ecv:APECO1_1831"/>
<dbReference type="HOGENOM" id="CLU_016922_1_5_6"/>
<dbReference type="UniPathway" id="UPA00251">
    <property type="reaction ID" value="UER00317"/>
</dbReference>
<dbReference type="Proteomes" id="UP000008216">
    <property type="component" value="Chromosome"/>
</dbReference>
<dbReference type="GO" id="GO:0005737">
    <property type="term" value="C:cytoplasm"/>
    <property type="evidence" value="ECO:0007669"/>
    <property type="project" value="UniProtKB-SubCell"/>
</dbReference>
<dbReference type="GO" id="GO:0042286">
    <property type="term" value="F:glutamate-1-semialdehyde 2,1-aminomutase activity"/>
    <property type="evidence" value="ECO:0007669"/>
    <property type="project" value="UniProtKB-UniRule"/>
</dbReference>
<dbReference type="GO" id="GO:0030170">
    <property type="term" value="F:pyridoxal phosphate binding"/>
    <property type="evidence" value="ECO:0007669"/>
    <property type="project" value="InterPro"/>
</dbReference>
<dbReference type="GO" id="GO:0008483">
    <property type="term" value="F:transaminase activity"/>
    <property type="evidence" value="ECO:0007669"/>
    <property type="project" value="InterPro"/>
</dbReference>
<dbReference type="GO" id="GO:0006782">
    <property type="term" value="P:protoporphyrinogen IX biosynthetic process"/>
    <property type="evidence" value="ECO:0007669"/>
    <property type="project" value="UniProtKB-UniRule"/>
</dbReference>
<dbReference type="CDD" id="cd00610">
    <property type="entry name" value="OAT_like"/>
    <property type="match status" value="1"/>
</dbReference>
<dbReference type="FunFam" id="3.40.640.10:FF:000021">
    <property type="entry name" value="Glutamate-1-semialdehyde 2,1-aminomutase"/>
    <property type="match status" value="1"/>
</dbReference>
<dbReference type="FunFam" id="3.90.1150.10:FF:000012">
    <property type="entry name" value="Glutamate-1-semialdehyde 2,1-aminomutase"/>
    <property type="match status" value="1"/>
</dbReference>
<dbReference type="Gene3D" id="3.90.1150.10">
    <property type="entry name" value="Aspartate Aminotransferase, domain 1"/>
    <property type="match status" value="1"/>
</dbReference>
<dbReference type="Gene3D" id="3.40.640.10">
    <property type="entry name" value="Type I PLP-dependent aspartate aminotransferase-like (Major domain)"/>
    <property type="match status" value="1"/>
</dbReference>
<dbReference type="HAMAP" id="MF_00375">
    <property type="entry name" value="HemL_aminotrans_3"/>
    <property type="match status" value="1"/>
</dbReference>
<dbReference type="InterPro" id="IPR004639">
    <property type="entry name" value="4pyrrol_synth_GluAld_NH2Trfase"/>
</dbReference>
<dbReference type="InterPro" id="IPR005814">
    <property type="entry name" value="Aminotrans_3"/>
</dbReference>
<dbReference type="InterPro" id="IPR049704">
    <property type="entry name" value="Aminotrans_3_PPA_site"/>
</dbReference>
<dbReference type="InterPro" id="IPR015424">
    <property type="entry name" value="PyrdxlP-dep_Trfase"/>
</dbReference>
<dbReference type="InterPro" id="IPR015421">
    <property type="entry name" value="PyrdxlP-dep_Trfase_major"/>
</dbReference>
<dbReference type="InterPro" id="IPR015422">
    <property type="entry name" value="PyrdxlP-dep_Trfase_small"/>
</dbReference>
<dbReference type="NCBIfam" id="TIGR00713">
    <property type="entry name" value="hemL"/>
    <property type="match status" value="1"/>
</dbReference>
<dbReference type="NCBIfam" id="NF000818">
    <property type="entry name" value="PRK00062.1"/>
    <property type="match status" value="1"/>
</dbReference>
<dbReference type="PANTHER" id="PTHR43713">
    <property type="entry name" value="GLUTAMATE-1-SEMIALDEHYDE 2,1-AMINOMUTASE"/>
    <property type="match status" value="1"/>
</dbReference>
<dbReference type="PANTHER" id="PTHR43713:SF3">
    <property type="entry name" value="GLUTAMATE-1-SEMIALDEHYDE 2,1-AMINOMUTASE 1, CHLOROPLASTIC-RELATED"/>
    <property type="match status" value="1"/>
</dbReference>
<dbReference type="Pfam" id="PF00202">
    <property type="entry name" value="Aminotran_3"/>
    <property type="match status" value="1"/>
</dbReference>
<dbReference type="SUPFAM" id="SSF53383">
    <property type="entry name" value="PLP-dependent transferases"/>
    <property type="match status" value="1"/>
</dbReference>
<dbReference type="PROSITE" id="PS00600">
    <property type="entry name" value="AA_TRANSFER_CLASS_3"/>
    <property type="match status" value="1"/>
</dbReference>
<protein>
    <recommendedName>
        <fullName evidence="1">Glutamate-1-semialdehyde 2,1-aminomutase</fullName>
        <shortName evidence="1">GSA</shortName>
        <ecNumber evidence="1">5.4.3.8</ecNumber>
    </recommendedName>
    <alternativeName>
        <fullName evidence="1">Glutamate-1-semialdehyde aminotransferase</fullName>
        <shortName evidence="1">GSA-AT</shortName>
    </alternativeName>
</protein>
<feature type="chain" id="PRO_0000300908" description="Glutamate-1-semialdehyde 2,1-aminomutase">
    <location>
        <begin position="1"/>
        <end position="426"/>
    </location>
</feature>
<feature type="modified residue" description="N6-(pyridoxal phosphate)lysine" evidence="1">
    <location>
        <position position="265"/>
    </location>
</feature>
<reference key="1">
    <citation type="journal article" date="2007" name="J. Bacteriol.">
        <title>The genome sequence of avian pathogenic Escherichia coli strain O1:K1:H7 shares strong similarities with human extraintestinal pathogenic E. coli genomes.</title>
        <authorList>
            <person name="Johnson T.J."/>
            <person name="Kariyawasam S."/>
            <person name="Wannemuehler Y."/>
            <person name="Mangiamele P."/>
            <person name="Johnson S.J."/>
            <person name="Doetkott C."/>
            <person name="Skyberg J.A."/>
            <person name="Lynne A.M."/>
            <person name="Johnson J.R."/>
            <person name="Nolan L.K."/>
        </authorList>
    </citation>
    <scope>NUCLEOTIDE SEQUENCE [LARGE SCALE GENOMIC DNA]</scope>
</reference>